<organism>
    <name type="scientific">Clostridium botulinum (strain Loch Maree / Type A3)</name>
    <dbReference type="NCBI Taxonomy" id="498214"/>
    <lineage>
        <taxon>Bacteria</taxon>
        <taxon>Bacillati</taxon>
        <taxon>Bacillota</taxon>
        <taxon>Clostridia</taxon>
        <taxon>Eubacteriales</taxon>
        <taxon>Clostridiaceae</taxon>
        <taxon>Clostridium</taxon>
    </lineage>
</organism>
<dbReference type="EC" id="5.4.2.10" evidence="1"/>
<dbReference type="EMBL" id="CP000962">
    <property type="protein sequence ID" value="ACA55164.1"/>
    <property type="molecule type" value="Genomic_DNA"/>
</dbReference>
<dbReference type="RefSeq" id="WP_012343185.1">
    <property type="nucleotide sequence ID" value="NC_010520.1"/>
</dbReference>
<dbReference type="SMR" id="B1KSG4"/>
<dbReference type="KEGG" id="cbl:CLK_2863"/>
<dbReference type="HOGENOM" id="CLU_016950_7_0_9"/>
<dbReference type="GO" id="GO:0005829">
    <property type="term" value="C:cytosol"/>
    <property type="evidence" value="ECO:0007669"/>
    <property type="project" value="TreeGrafter"/>
</dbReference>
<dbReference type="GO" id="GO:0000287">
    <property type="term" value="F:magnesium ion binding"/>
    <property type="evidence" value="ECO:0007669"/>
    <property type="project" value="UniProtKB-UniRule"/>
</dbReference>
<dbReference type="GO" id="GO:0008966">
    <property type="term" value="F:phosphoglucosamine mutase activity"/>
    <property type="evidence" value="ECO:0007669"/>
    <property type="project" value="UniProtKB-UniRule"/>
</dbReference>
<dbReference type="GO" id="GO:0004615">
    <property type="term" value="F:phosphomannomutase activity"/>
    <property type="evidence" value="ECO:0007669"/>
    <property type="project" value="TreeGrafter"/>
</dbReference>
<dbReference type="GO" id="GO:0005975">
    <property type="term" value="P:carbohydrate metabolic process"/>
    <property type="evidence" value="ECO:0007669"/>
    <property type="project" value="InterPro"/>
</dbReference>
<dbReference type="GO" id="GO:0009252">
    <property type="term" value="P:peptidoglycan biosynthetic process"/>
    <property type="evidence" value="ECO:0007669"/>
    <property type="project" value="TreeGrafter"/>
</dbReference>
<dbReference type="GO" id="GO:0006048">
    <property type="term" value="P:UDP-N-acetylglucosamine biosynthetic process"/>
    <property type="evidence" value="ECO:0007669"/>
    <property type="project" value="TreeGrafter"/>
</dbReference>
<dbReference type="CDD" id="cd05802">
    <property type="entry name" value="GlmM"/>
    <property type="match status" value="1"/>
</dbReference>
<dbReference type="FunFam" id="3.30.310.50:FF:000001">
    <property type="entry name" value="Phosphoglucosamine mutase"/>
    <property type="match status" value="1"/>
</dbReference>
<dbReference type="FunFam" id="3.40.120.10:FF:000001">
    <property type="entry name" value="Phosphoglucosamine mutase"/>
    <property type="match status" value="1"/>
</dbReference>
<dbReference type="FunFam" id="3.40.120.10:FF:000002">
    <property type="entry name" value="Phosphoglucosamine mutase"/>
    <property type="match status" value="1"/>
</dbReference>
<dbReference type="Gene3D" id="3.40.120.10">
    <property type="entry name" value="Alpha-D-Glucose-1,6-Bisphosphate, subunit A, domain 3"/>
    <property type="match status" value="3"/>
</dbReference>
<dbReference type="Gene3D" id="3.30.310.50">
    <property type="entry name" value="Alpha-D-phosphohexomutase, C-terminal domain"/>
    <property type="match status" value="1"/>
</dbReference>
<dbReference type="HAMAP" id="MF_01554_B">
    <property type="entry name" value="GlmM_B"/>
    <property type="match status" value="1"/>
</dbReference>
<dbReference type="InterPro" id="IPR005844">
    <property type="entry name" value="A-D-PHexomutase_a/b/a-I"/>
</dbReference>
<dbReference type="InterPro" id="IPR016055">
    <property type="entry name" value="A-D-PHexomutase_a/b/a-I/II/III"/>
</dbReference>
<dbReference type="InterPro" id="IPR005845">
    <property type="entry name" value="A-D-PHexomutase_a/b/a-II"/>
</dbReference>
<dbReference type="InterPro" id="IPR005846">
    <property type="entry name" value="A-D-PHexomutase_a/b/a-III"/>
</dbReference>
<dbReference type="InterPro" id="IPR005843">
    <property type="entry name" value="A-D-PHexomutase_C"/>
</dbReference>
<dbReference type="InterPro" id="IPR036900">
    <property type="entry name" value="A-D-PHexomutase_C_sf"/>
</dbReference>
<dbReference type="InterPro" id="IPR016066">
    <property type="entry name" value="A-D-PHexomutase_CS"/>
</dbReference>
<dbReference type="InterPro" id="IPR005841">
    <property type="entry name" value="Alpha-D-phosphohexomutase_SF"/>
</dbReference>
<dbReference type="InterPro" id="IPR006352">
    <property type="entry name" value="GlmM_bact"/>
</dbReference>
<dbReference type="InterPro" id="IPR050060">
    <property type="entry name" value="Phosphoglucosamine_mutase"/>
</dbReference>
<dbReference type="NCBIfam" id="TIGR01455">
    <property type="entry name" value="glmM"/>
    <property type="match status" value="1"/>
</dbReference>
<dbReference type="NCBIfam" id="NF008139">
    <property type="entry name" value="PRK10887.1"/>
    <property type="match status" value="1"/>
</dbReference>
<dbReference type="PANTHER" id="PTHR42946:SF1">
    <property type="entry name" value="PHOSPHOGLUCOMUTASE (ALPHA-D-GLUCOSE-1,6-BISPHOSPHATE-DEPENDENT)"/>
    <property type="match status" value="1"/>
</dbReference>
<dbReference type="PANTHER" id="PTHR42946">
    <property type="entry name" value="PHOSPHOHEXOSE MUTASE"/>
    <property type="match status" value="1"/>
</dbReference>
<dbReference type="Pfam" id="PF02878">
    <property type="entry name" value="PGM_PMM_I"/>
    <property type="match status" value="1"/>
</dbReference>
<dbReference type="Pfam" id="PF02879">
    <property type="entry name" value="PGM_PMM_II"/>
    <property type="match status" value="1"/>
</dbReference>
<dbReference type="Pfam" id="PF02880">
    <property type="entry name" value="PGM_PMM_III"/>
    <property type="match status" value="1"/>
</dbReference>
<dbReference type="Pfam" id="PF00408">
    <property type="entry name" value="PGM_PMM_IV"/>
    <property type="match status" value="1"/>
</dbReference>
<dbReference type="PRINTS" id="PR00509">
    <property type="entry name" value="PGMPMM"/>
</dbReference>
<dbReference type="SUPFAM" id="SSF55957">
    <property type="entry name" value="Phosphoglucomutase, C-terminal domain"/>
    <property type="match status" value="1"/>
</dbReference>
<dbReference type="SUPFAM" id="SSF53738">
    <property type="entry name" value="Phosphoglucomutase, first 3 domains"/>
    <property type="match status" value="3"/>
</dbReference>
<dbReference type="PROSITE" id="PS00710">
    <property type="entry name" value="PGM_PMM"/>
    <property type="match status" value="1"/>
</dbReference>
<gene>
    <name evidence="1" type="primary">glmM</name>
    <name type="ordered locus">CLK_2863</name>
</gene>
<sequence length="449" mass="48800">MGRMFGTDGVRGIANKELTADLAYKLGKAGAFILTEGTHRPKILVGMDTRISGDMLESALVAGILSVGAEAICVGVIPTPAIAYLTRKYNADAGVVISASHNPVEYNGIKFFNKNGYKLSDELEDNIQALIENNFKDVPVLTGENIGRKIEEDGEAIRDYIDFAKSTIKGDLKGLKVALDCANGASYITSVEAFKELGAEVHVINNKPDGININRNSGSTHPEDLIEYVVKNSCQIGLAFDGDADRCLAIDEKGNLINGDFILAICGKELKKQGRLKKNTIVVTVMSNLGLDIAMKKEEINTIKTKVGDRYVLEEMLRNDYAIGGEQSGHIIFSDYNTTGDGLVTALQLAHIVKESGKTFSELCSIMKELPQVLVNAKVPNDQKDIYLKDEEIKSEIDTITKNLDGSGRVLIRPSGTEPLVRVMLEGENQGEIDKLAHGLAKLIEKKVK</sequence>
<reference key="1">
    <citation type="journal article" date="2007" name="PLoS ONE">
        <title>Analysis of the neurotoxin complex genes in Clostridium botulinum A1-A4 and B1 strains: BoNT/A3, /Ba4 and /B1 clusters are located within plasmids.</title>
        <authorList>
            <person name="Smith T.J."/>
            <person name="Hill K.K."/>
            <person name="Foley B.T."/>
            <person name="Detter J.C."/>
            <person name="Munk A.C."/>
            <person name="Bruce D.C."/>
            <person name="Doggett N.A."/>
            <person name="Smith L.A."/>
            <person name="Marks J.D."/>
            <person name="Xie G."/>
            <person name="Brettin T.S."/>
        </authorList>
    </citation>
    <scope>NUCLEOTIDE SEQUENCE [LARGE SCALE GENOMIC DNA]</scope>
    <source>
        <strain>Loch Maree / Type A3</strain>
    </source>
</reference>
<protein>
    <recommendedName>
        <fullName evidence="1">Phosphoglucosamine mutase</fullName>
        <ecNumber evidence="1">5.4.2.10</ecNumber>
    </recommendedName>
</protein>
<keyword id="KW-0413">Isomerase</keyword>
<keyword id="KW-0460">Magnesium</keyword>
<keyword id="KW-0479">Metal-binding</keyword>
<keyword id="KW-0597">Phosphoprotein</keyword>
<comment type="function">
    <text evidence="1">Catalyzes the conversion of glucosamine-6-phosphate to glucosamine-1-phosphate.</text>
</comment>
<comment type="catalytic activity">
    <reaction evidence="1">
        <text>alpha-D-glucosamine 1-phosphate = D-glucosamine 6-phosphate</text>
        <dbReference type="Rhea" id="RHEA:23424"/>
        <dbReference type="ChEBI" id="CHEBI:58516"/>
        <dbReference type="ChEBI" id="CHEBI:58725"/>
        <dbReference type="EC" id="5.4.2.10"/>
    </reaction>
</comment>
<comment type="cofactor">
    <cofactor evidence="1">
        <name>Mg(2+)</name>
        <dbReference type="ChEBI" id="CHEBI:18420"/>
    </cofactor>
    <text evidence="1">Binds 1 Mg(2+) ion per subunit.</text>
</comment>
<comment type="PTM">
    <text evidence="1">Activated by phosphorylation.</text>
</comment>
<comment type="similarity">
    <text evidence="1">Belongs to the phosphohexose mutase family.</text>
</comment>
<feature type="chain" id="PRO_1000201077" description="Phosphoglucosamine mutase">
    <location>
        <begin position="1"/>
        <end position="449"/>
    </location>
</feature>
<feature type="active site" description="Phosphoserine intermediate" evidence="1">
    <location>
        <position position="100"/>
    </location>
</feature>
<feature type="binding site" description="via phosphate group" evidence="1">
    <location>
        <position position="100"/>
    </location>
    <ligand>
        <name>Mg(2+)</name>
        <dbReference type="ChEBI" id="CHEBI:18420"/>
    </ligand>
</feature>
<feature type="binding site" evidence="1">
    <location>
        <position position="241"/>
    </location>
    <ligand>
        <name>Mg(2+)</name>
        <dbReference type="ChEBI" id="CHEBI:18420"/>
    </ligand>
</feature>
<feature type="binding site" evidence="1">
    <location>
        <position position="243"/>
    </location>
    <ligand>
        <name>Mg(2+)</name>
        <dbReference type="ChEBI" id="CHEBI:18420"/>
    </ligand>
</feature>
<feature type="binding site" evidence="1">
    <location>
        <position position="245"/>
    </location>
    <ligand>
        <name>Mg(2+)</name>
        <dbReference type="ChEBI" id="CHEBI:18420"/>
    </ligand>
</feature>
<feature type="modified residue" description="Phosphoserine" evidence="1">
    <location>
        <position position="100"/>
    </location>
</feature>
<accession>B1KSG4</accession>
<name>GLMM_CLOBM</name>
<proteinExistence type="inferred from homology"/>
<evidence type="ECO:0000255" key="1">
    <source>
        <dbReference type="HAMAP-Rule" id="MF_01554"/>
    </source>
</evidence>